<feature type="chain" id="PRO_0000273536" description="SKP1-interacting partner 15">
    <location>
        <begin position="1"/>
        <end position="374"/>
    </location>
</feature>
<feature type="domain" description="F-box" evidence="2">
    <location>
        <begin position="3"/>
        <end position="48"/>
    </location>
</feature>
<reference key="1">
    <citation type="journal article" date="2000" name="Nature">
        <title>Sequence and analysis of chromosome 1 of the plant Arabidopsis thaliana.</title>
        <authorList>
            <person name="Theologis A."/>
            <person name="Ecker J.R."/>
            <person name="Palm C.J."/>
            <person name="Federspiel N.A."/>
            <person name="Kaul S."/>
            <person name="White O."/>
            <person name="Alonso J."/>
            <person name="Altafi H."/>
            <person name="Araujo R."/>
            <person name="Bowman C.L."/>
            <person name="Brooks S.Y."/>
            <person name="Buehler E."/>
            <person name="Chan A."/>
            <person name="Chao Q."/>
            <person name="Chen H."/>
            <person name="Cheuk R.F."/>
            <person name="Chin C.W."/>
            <person name="Chung M.K."/>
            <person name="Conn L."/>
            <person name="Conway A.B."/>
            <person name="Conway A.R."/>
            <person name="Creasy T.H."/>
            <person name="Dewar K."/>
            <person name="Dunn P."/>
            <person name="Etgu P."/>
            <person name="Feldblyum T.V."/>
            <person name="Feng J.-D."/>
            <person name="Fong B."/>
            <person name="Fujii C.Y."/>
            <person name="Gill J.E."/>
            <person name="Goldsmith A.D."/>
            <person name="Haas B."/>
            <person name="Hansen N.F."/>
            <person name="Hughes B."/>
            <person name="Huizar L."/>
            <person name="Hunter J.L."/>
            <person name="Jenkins J."/>
            <person name="Johnson-Hopson C."/>
            <person name="Khan S."/>
            <person name="Khaykin E."/>
            <person name="Kim C.J."/>
            <person name="Koo H.L."/>
            <person name="Kremenetskaia I."/>
            <person name="Kurtz D.B."/>
            <person name="Kwan A."/>
            <person name="Lam B."/>
            <person name="Langin-Hooper S."/>
            <person name="Lee A."/>
            <person name="Lee J.M."/>
            <person name="Lenz C.A."/>
            <person name="Li J.H."/>
            <person name="Li Y.-P."/>
            <person name="Lin X."/>
            <person name="Liu S.X."/>
            <person name="Liu Z.A."/>
            <person name="Luros J.S."/>
            <person name="Maiti R."/>
            <person name="Marziali A."/>
            <person name="Militscher J."/>
            <person name="Miranda M."/>
            <person name="Nguyen M."/>
            <person name="Nierman W.C."/>
            <person name="Osborne B.I."/>
            <person name="Pai G."/>
            <person name="Peterson J."/>
            <person name="Pham P.K."/>
            <person name="Rizzo M."/>
            <person name="Rooney T."/>
            <person name="Rowley D."/>
            <person name="Sakano H."/>
            <person name="Salzberg S.L."/>
            <person name="Schwartz J.R."/>
            <person name="Shinn P."/>
            <person name="Southwick A.M."/>
            <person name="Sun H."/>
            <person name="Tallon L.J."/>
            <person name="Tambunga G."/>
            <person name="Toriumi M.J."/>
            <person name="Town C.D."/>
            <person name="Utterback T."/>
            <person name="Van Aken S."/>
            <person name="Vaysberg M."/>
            <person name="Vysotskaia V.S."/>
            <person name="Walker M."/>
            <person name="Wu D."/>
            <person name="Yu G."/>
            <person name="Fraser C.M."/>
            <person name="Venter J.C."/>
            <person name="Davis R.W."/>
        </authorList>
    </citation>
    <scope>NUCLEOTIDE SEQUENCE [LARGE SCALE GENOMIC DNA]</scope>
    <source>
        <strain>cv. Columbia</strain>
    </source>
</reference>
<reference key="2">
    <citation type="journal article" date="2017" name="Plant J.">
        <title>Araport11: a complete reannotation of the Arabidopsis thaliana reference genome.</title>
        <authorList>
            <person name="Cheng C.Y."/>
            <person name="Krishnakumar V."/>
            <person name="Chan A.P."/>
            <person name="Thibaud-Nissen F."/>
            <person name="Schobel S."/>
            <person name="Town C.D."/>
        </authorList>
    </citation>
    <scope>GENOME REANNOTATION</scope>
    <source>
        <strain>cv. Columbia</strain>
    </source>
</reference>
<reference key="3">
    <citation type="journal article" date="2003" name="Science">
        <title>Empirical analysis of transcriptional activity in the Arabidopsis genome.</title>
        <authorList>
            <person name="Yamada K."/>
            <person name="Lim J."/>
            <person name="Dale J.M."/>
            <person name="Chen H."/>
            <person name="Shinn P."/>
            <person name="Palm C.J."/>
            <person name="Southwick A.M."/>
            <person name="Wu H.C."/>
            <person name="Kim C.J."/>
            <person name="Nguyen M."/>
            <person name="Pham P.K."/>
            <person name="Cheuk R.F."/>
            <person name="Karlin-Newmann G."/>
            <person name="Liu S.X."/>
            <person name="Lam B."/>
            <person name="Sakano H."/>
            <person name="Wu T."/>
            <person name="Yu G."/>
            <person name="Miranda M."/>
            <person name="Quach H.L."/>
            <person name="Tripp M."/>
            <person name="Chang C.H."/>
            <person name="Lee J.M."/>
            <person name="Toriumi M.J."/>
            <person name="Chan M.M."/>
            <person name="Tang C.C."/>
            <person name="Onodera C.S."/>
            <person name="Deng J.M."/>
            <person name="Akiyama K."/>
            <person name="Ansari Y."/>
            <person name="Arakawa T."/>
            <person name="Banh J."/>
            <person name="Banno F."/>
            <person name="Bowser L."/>
            <person name="Brooks S.Y."/>
            <person name="Carninci P."/>
            <person name="Chao Q."/>
            <person name="Choy N."/>
            <person name="Enju A."/>
            <person name="Goldsmith A.D."/>
            <person name="Gurjal M."/>
            <person name="Hansen N.F."/>
            <person name="Hayashizaki Y."/>
            <person name="Johnson-Hopson C."/>
            <person name="Hsuan V.W."/>
            <person name="Iida K."/>
            <person name="Karnes M."/>
            <person name="Khan S."/>
            <person name="Koesema E."/>
            <person name="Ishida J."/>
            <person name="Jiang P.X."/>
            <person name="Jones T."/>
            <person name="Kawai J."/>
            <person name="Kamiya A."/>
            <person name="Meyers C."/>
            <person name="Nakajima M."/>
            <person name="Narusaka M."/>
            <person name="Seki M."/>
            <person name="Sakurai T."/>
            <person name="Satou M."/>
            <person name="Tamse R."/>
            <person name="Vaysberg M."/>
            <person name="Wallender E.K."/>
            <person name="Wong C."/>
            <person name="Yamamura Y."/>
            <person name="Yuan S."/>
            <person name="Shinozaki K."/>
            <person name="Davis R.W."/>
            <person name="Theologis A."/>
            <person name="Ecker J.R."/>
        </authorList>
    </citation>
    <scope>NUCLEOTIDE SEQUENCE [LARGE SCALE MRNA]</scope>
    <source>
        <strain>cv. Columbia</strain>
    </source>
</reference>
<reference key="4">
    <citation type="submission" date="2002-03" db="EMBL/GenBank/DDBJ databases">
        <title>Full-length cDNA from Arabidopsis thaliana.</title>
        <authorList>
            <person name="Brover V.V."/>
            <person name="Troukhan M.E."/>
            <person name="Alexandrov N.A."/>
            <person name="Lu Y.-P."/>
            <person name="Flavell R.B."/>
            <person name="Feldmann K.A."/>
        </authorList>
    </citation>
    <scope>NUCLEOTIDE SEQUENCE [LARGE SCALE MRNA]</scope>
</reference>
<reference key="5">
    <citation type="journal article" date="2000" name="Trends Plant Sci.">
        <title>F-box proteins in Arabidopsis.</title>
        <authorList>
            <person name="Xiao W."/>
            <person name="Jang J.-C."/>
        </authorList>
    </citation>
    <scope>GENE FAMILY</scope>
    <scope>NOMENCLATURE</scope>
</reference>
<reference key="6">
    <citation type="journal article" date="2002" name="Proc. Natl. Acad. Sci. U.S.A.">
        <title>The F-box subunit of the SCF E3 complex is encoded by a diverse superfamily of genes in Arabidopsis.</title>
        <authorList>
            <person name="Gagne J.M."/>
            <person name="Downes B.P."/>
            <person name="Shiu S.-H."/>
            <person name="Durski A.M."/>
            <person name="Vierstra R.D."/>
        </authorList>
    </citation>
    <scope>INTERACTION WITH SKP1A/ASK1; SKP1B/ASK2; ASK11 AND ASK13</scope>
</reference>
<reference key="7">
    <citation type="journal article" date="2003" name="Plant J.">
        <title>Protein interaction analysis of SCF ubiquitin E3 ligase subunits from Arabidopsis.</title>
        <authorList>
            <person name="Risseeuw E.P."/>
            <person name="Daskalchuk T.E."/>
            <person name="Banks T.W."/>
            <person name="Liu E."/>
            <person name="Cotelesage J."/>
            <person name="Hellmann H."/>
            <person name="Estelle M."/>
            <person name="Somers D.E."/>
            <person name="Crosby W.L."/>
        </authorList>
    </citation>
    <scope>INTERACTION WITH SKPIB/ASK2</scope>
</reference>
<name>SKI15_ARATH</name>
<protein>
    <recommendedName>
        <fullName>SKP1-interacting partner 15</fullName>
    </recommendedName>
    <alternativeName>
        <fullName>F-box only protein 3</fullName>
    </alternativeName>
</protein>
<dbReference type="EMBL" id="AC002291">
    <property type="protein sequence ID" value="AAC00632.1"/>
    <property type="molecule type" value="Genomic_DNA"/>
</dbReference>
<dbReference type="EMBL" id="CP002684">
    <property type="protein sequence ID" value="AEE35903.1"/>
    <property type="molecule type" value="Genomic_DNA"/>
</dbReference>
<dbReference type="EMBL" id="AY065102">
    <property type="protein sequence ID" value="AAL38278.1"/>
    <property type="molecule type" value="mRNA"/>
</dbReference>
<dbReference type="EMBL" id="BT008455">
    <property type="protein sequence ID" value="AAP37814.1"/>
    <property type="molecule type" value="mRNA"/>
</dbReference>
<dbReference type="EMBL" id="AY085473">
    <property type="protein sequence ID" value="AAM62699.1"/>
    <property type="molecule type" value="mRNA"/>
</dbReference>
<dbReference type="PIR" id="A96798">
    <property type="entry name" value="A96798"/>
</dbReference>
<dbReference type="RefSeq" id="NP_565142.1">
    <property type="nucleotide sequence ID" value="NM_106343.4"/>
</dbReference>
<dbReference type="SMR" id="O49279"/>
<dbReference type="BioGRID" id="29246">
    <property type="interactions" value="12"/>
</dbReference>
<dbReference type="FunCoup" id="O49279">
    <property type="interactions" value="1874"/>
</dbReference>
<dbReference type="IntAct" id="O49279">
    <property type="interactions" value="12"/>
</dbReference>
<dbReference type="STRING" id="3702.O49279"/>
<dbReference type="PaxDb" id="3702-AT1G76920.1"/>
<dbReference type="ProteomicsDB" id="234466"/>
<dbReference type="EnsemblPlants" id="AT1G76920.1">
    <property type="protein sequence ID" value="AT1G76920.1"/>
    <property type="gene ID" value="AT1G76920"/>
</dbReference>
<dbReference type="GeneID" id="844027"/>
<dbReference type="Gramene" id="AT1G76920.1">
    <property type="protein sequence ID" value="AT1G76920.1"/>
    <property type="gene ID" value="AT1G76920"/>
</dbReference>
<dbReference type="KEGG" id="ath:AT1G76920"/>
<dbReference type="Araport" id="AT1G76920"/>
<dbReference type="TAIR" id="AT1G76920"/>
<dbReference type="eggNOG" id="ENOG502QT3E">
    <property type="taxonomic scope" value="Eukaryota"/>
</dbReference>
<dbReference type="HOGENOM" id="CLU_055529_0_0_1"/>
<dbReference type="InParanoid" id="O49279"/>
<dbReference type="OMA" id="GNAMPTA"/>
<dbReference type="OrthoDB" id="1922820at2759"/>
<dbReference type="PhylomeDB" id="O49279"/>
<dbReference type="UniPathway" id="UPA00143"/>
<dbReference type="PRO" id="PR:O49279"/>
<dbReference type="Proteomes" id="UP000006548">
    <property type="component" value="Chromosome 1"/>
</dbReference>
<dbReference type="ExpressionAtlas" id="O49279">
    <property type="expression patterns" value="baseline and differential"/>
</dbReference>
<dbReference type="GO" id="GO:0005634">
    <property type="term" value="C:nucleus"/>
    <property type="evidence" value="ECO:0000314"/>
    <property type="project" value="TAIR"/>
</dbReference>
<dbReference type="GO" id="GO:0016567">
    <property type="term" value="P:protein ubiquitination"/>
    <property type="evidence" value="ECO:0000314"/>
    <property type="project" value="TAIR"/>
</dbReference>
<dbReference type="GO" id="GO:0006511">
    <property type="term" value="P:ubiquitin-dependent protein catabolic process"/>
    <property type="evidence" value="ECO:0000314"/>
    <property type="project" value="TAIR"/>
</dbReference>
<dbReference type="CDD" id="cd22158">
    <property type="entry name" value="F-box_AtFBW2-like"/>
    <property type="match status" value="1"/>
</dbReference>
<dbReference type="Gene3D" id="1.20.1280.50">
    <property type="match status" value="1"/>
</dbReference>
<dbReference type="Gene3D" id="2.120.10.80">
    <property type="entry name" value="Kelch-type beta propeller"/>
    <property type="match status" value="1"/>
</dbReference>
<dbReference type="InterPro" id="IPR036047">
    <property type="entry name" value="F-box-like_dom_sf"/>
</dbReference>
<dbReference type="InterPro" id="IPR001810">
    <property type="entry name" value="F-box_dom"/>
</dbReference>
<dbReference type="InterPro" id="IPR015915">
    <property type="entry name" value="Kelch-typ_b-propeller"/>
</dbReference>
<dbReference type="InterPro" id="IPR011498">
    <property type="entry name" value="Kelch_2"/>
</dbReference>
<dbReference type="PANTHER" id="PTHR47719">
    <property type="entry name" value="SKP1-INTERACTING PARTNER 15"/>
    <property type="match status" value="1"/>
</dbReference>
<dbReference type="PANTHER" id="PTHR47719:SF2">
    <property type="entry name" value="SKP1-INTERACTING PARTNER 15"/>
    <property type="match status" value="1"/>
</dbReference>
<dbReference type="Pfam" id="PF00646">
    <property type="entry name" value="F-box"/>
    <property type="match status" value="1"/>
</dbReference>
<dbReference type="Pfam" id="PF07646">
    <property type="entry name" value="Kelch_2"/>
    <property type="match status" value="1"/>
</dbReference>
<dbReference type="SMART" id="SM00256">
    <property type="entry name" value="FBOX"/>
    <property type="match status" value="1"/>
</dbReference>
<dbReference type="SUPFAM" id="SSF81383">
    <property type="entry name" value="F-box domain"/>
    <property type="match status" value="1"/>
</dbReference>
<dbReference type="SUPFAM" id="SSF117281">
    <property type="entry name" value="Kelch motif"/>
    <property type="match status" value="1"/>
</dbReference>
<dbReference type="PROSITE" id="PS50181">
    <property type="entry name" value="FBOX"/>
    <property type="match status" value="1"/>
</dbReference>
<keyword id="KW-0539">Nucleus</keyword>
<keyword id="KW-1185">Reference proteome</keyword>
<keyword id="KW-0833">Ubl conjugation pathway</keyword>
<organism>
    <name type="scientific">Arabidopsis thaliana</name>
    <name type="common">Mouse-ear cress</name>
    <dbReference type="NCBI Taxonomy" id="3702"/>
    <lineage>
        <taxon>Eukaryota</taxon>
        <taxon>Viridiplantae</taxon>
        <taxon>Streptophyta</taxon>
        <taxon>Embryophyta</taxon>
        <taxon>Tracheophyta</taxon>
        <taxon>Spermatophyta</taxon>
        <taxon>Magnoliopsida</taxon>
        <taxon>eudicotyledons</taxon>
        <taxon>Gunneridae</taxon>
        <taxon>Pentapetalae</taxon>
        <taxon>rosids</taxon>
        <taxon>malvids</taxon>
        <taxon>Brassicales</taxon>
        <taxon>Brassicaceae</taxon>
        <taxon>Camelineae</taxon>
        <taxon>Arabidopsis</taxon>
    </lineage>
</organism>
<gene>
    <name type="primary">SKIP15</name>
    <name type="synonym">FBX3</name>
    <name type="ordered locus">At1g76920</name>
    <name type="ORF">F22K20.2</name>
</gene>
<sequence length="374" mass="42494">MESSPVNCLPPDSLHQIFSSLPIRDIMICRSVCKFFNQLLTSQCFIEIISTRPPLNLLALRPPHHHHSHRHSGNGHATNIRPYIHVYDPEQNQWFRFNLDFLPFRSPQPVASSSGLIYLWGDSIDLAESSKSLVACNPLTRQFKVLPQLGSAWSRHGTVLVDSVNRVMVLTELAALYYSGTVVANQWLKFSSNLPSKPRSPVLMSSSVFALCDVGSPWRSQWKLFSCKLTNLTITHTNWVCLEKHEWGDIFDIIKRPRLLRGNGDSKLLMIGGLKSTFSLNPACSTILILRLDLESLEWEEAGRMPLEMYRGFQESSKFKVFGGGDRVYFSAKRMGKLAMWDCWQGWRWIEGVPGYADGLCRGFVFDAKLTLMP</sequence>
<proteinExistence type="evidence at protein level"/>
<comment type="function">
    <text evidence="1">Component of SCF(ASK-cullin-F-box) E3 ubiquitin ligase complexes, which may mediate the ubiquitination and subsequent proteasomal degradation of target proteins.</text>
</comment>
<comment type="pathway">
    <text>Protein modification; protein ubiquitination.</text>
</comment>
<comment type="subunit">
    <text evidence="1 3 4">Part of a SCF (ASK-cullin-F-box) protein ligase complex (By similarity). Interacts with SKP1A/ASK1, SKP1B/ASK2, ASK11 and ASK13.</text>
</comment>
<comment type="interaction">
    <interactant intactId="EBI-591174">
        <id>O49279</id>
    </interactant>
    <interactant intactId="EBI-401185">
        <id>O49484</id>
        <label>ASK11</label>
    </interactant>
    <organismsDiffer>false</organismsDiffer>
    <experiments>3</experiments>
</comment>
<comment type="interaction">
    <interactant intactId="EBI-591174">
        <id>O49279</id>
    </interactant>
    <interactant intactId="EBI-532357">
        <id>Q39255</id>
        <label>SKP1A</label>
    </interactant>
    <organismsDiffer>false</organismsDiffer>
    <experiments>4</experiments>
</comment>
<comment type="interaction">
    <interactant intactId="EBI-591174">
        <id>O49279</id>
    </interactant>
    <interactant intactId="EBI-604076">
        <id>Q9FHW7</id>
        <label>SKP1B</label>
    </interactant>
    <organismsDiffer>false</organismsDiffer>
    <experiments>6</experiments>
</comment>
<comment type="subcellular location">
    <subcellularLocation>
        <location evidence="1">Nucleus</location>
    </subcellularLocation>
</comment>
<comment type="domain">
    <text evidence="1">The F-box is necessary for the interaction with ASK proteins.</text>
</comment>
<accession>O49279</accession>
<evidence type="ECO:0000250" key="1"/>
<evidence type="ECO:0000255" key="2">
    <source>
        <dbReference type="PROSITE-ProRule" id="PRU00080"/>
    </source>
</evidence>
<evidence type="ECO:0000269" key="3">
    <source>
    </source>
</evidence>
<evidence type="ECO:0000269" key="4">
    <source>
    </source>
</evidence>